<evidence type="ECO:0000255" key="1">
    <source>
        <dbReference type="HAMAP-Rule" id="MF_01396"/>
    </source>
</evidence>
<reference key="1">
    <citation type="submission" date="1994-08" db="EMBL/GenBank/DDBJ databases">
        <authorList>
            <person name="Ishizuka M."/>
        </authorList>
    </citation>
    <scope>NUCLEOTIDE SEQUENCE [GENOMIC DNA]</scope>
</reference>
<sequence length="72" mass="7249">MSLGVLAAAIAVGLGALGAGIGNGLIVSRTIEGIAAQPELRPVLQTTMFIGVALVEALPIIGVVFSFIYLGR</sequence>
<protein>
    <recommendedName>
        <fullName evidence="1">ATP synthase subunit c</fullName>
    </recommendedName>
    <alternativeName>
        <fullName evidence="1">ATP synthase F(0) sector subunit c</fullName>
    </alternativeName>
    <alternativeName>
        <fullName evidence="1">F-type ATPase subunit c</fullName>
        <shortName evidence="1">F-ATPase subunit c</shortName>
    </alternativeName>
    <alternativeName>
        <fullName evidence="1">Lipid-binding protein</fullName>
    </alternativeName>
</protein>
<organism>
    <name type="scientific">Bacillus caldotenax</name>
    <dbReference type="NCBI Taxonomy" id="1395"/>
    <lineage>
        <taxon>Bacteria</taxon>
        <taxon>Bacillati</taxon>
        <taxon>Bacillota</taxon>
        <taxon>Bacilli</taxon>
        <taxon>Bacillales</taxon>
        <taxon>Anoxybacillaceae</taxon>
        <taxon>Geobacillus</taxon>
        <taxon>Geobacillus thermoleovorans group</taxon>
    </lineage>
</organism>
<gene>
    <name evidence="1" type="primary">atpE</name>
</gene>
<proteinExistence type="inferred from homology"/>
<feature type="chain" id="PRO_0000112134" description="ATP synthase subunit c">
    <location>
        <begin position="1"/>
        <end position="72"/>
    </location>
</feature>
<feature type="transmembrane region" description="Helical" evidence="1">
    <location>
        <begin position="1"/>
        <end position="21"/>
    </location>
</feature>
<feature type="transmembrane region" description="Helical" evidence="1">
    <location>
        <begin position="48"/>
        <end position="68"/>
    </location>
</feature>
<feature type="site" description="Reversibly protonated during proton transport" evidence="1">
    <location>
        <position position="56"/>
    </location>
</feature>
<dbReference type="EMBL" id="D38057">
    <property type="protein sequence ID" value="BAA07244.1"/>
    <property type="molecule type" value="Genomic_DNA"/>
</dbReference>
<dbReference type="BMRB" id="P41015"/>
<dbReference type="SMR" id="P41015"/>
<dbReference type="GO" id="GO:0005886">
    <property type="term" value="C:plasma membrane"/>
    <property type="evidence" value="ECO:0007669"/>
    <property type="project" value="UniProtKB-SubCell"/>
</dbReference>
<dbReference type="GO" id="GO:0045259">
    <property type="term" value="C:proton-transporting ATP synthase complex"/>
    <property type="evidence" value="ECO:0007669"/>
    <property type="project" value="UniProtKB-KW"/>
</dbReference>
<dbReference type="GO" id="GO:0033177">
    <property type="term" value="C:proton-transporting two-sector ATPase complex, proton-transporting domain"/>
    <property type="evidence" value="ECO:0007669"/>
    <property type="project" value="InterPro"/>
</dbReference>
<dbReference type="GO" id="GO:0008289">
    <property type="term" value="F:lipid binding"/>
    <property type="evidence" value="ECO:0007669"/>
    <property type="project" value="UniProtKB-KW"/>
</dbReference>
<dbReference type="GO" id="GO:0046933">
    <property type="term" value="F:proton-transporting ATP synthase activity, rotational mechanism"/>
    <property type="evidence" value="ECO:0007669"/>
    <property type="project" value="UniProtKB-UniRule"/>
</dbReference>
<dbReference type="CDD" id="cd18185">
    <property type="entry name" value="ATP-synt_Fo_c_ATPE"/>
    <property type="match status" value="1"/>
</dbReference>
<dbReference type="FunFam" id="1.20.20.10:FF:000004">
    <property type="entry name" value="ATP synthase subunit c"/>
    <property type="match status" value="1"/>
</dbReference>
<dbReference type="Gene3D" id="1.20.20.10">
    <property type="entry name" value="F1F0 ATP synthase subunit C"/>
    <property type="match status" value="1"/>
</dbReference>
<dbReference type="HAMAP" id="MF_01396">
    <property type="entry name" value="ATP_synth_c_bact"/>
    <property type="match status" value="1"/>
</dbReference>
<dbReference type="InterPro" id="IPR005953">
    <property type="entry name" value="ATP_synth_csu_bac/chlpt"/>
</dbReference>
<dbReference type="InterPro" id="IPR000454">
    <property type="entry name" value="ATP_synth_F0_csu"/>
</dbReference>
<dbReference type="InterPro" id="IPR038662">
    <property type="entry name" value="ATP_synth_F0_csu_sf"/>
</dbReference>
<dbReference type="InterPro" id="IPR002379">
    <property type="entry name" value="ATPase_proteolipid_c-like_dom"/>
</dbReference>
<dbReference type="InterPro" id="IPR035921">
    <property type="entry name" value="F/V-ATP_Csub_sf"/>
</dbReference>
<dbReference type="NCBIfam" id="TIGR01260">
    <property type="entry name" value="ATP_synt_c"/>
    <property type="match status" value="1"/>
</dbReference>
<dbReference type="NCBIfam" id="NF005363">
    <property type="entry name" value="PRK06876.1"/>
    <property type="match status" value="1"/>
</dbReference>
<dbReference type="Pfam" id="PF00137">
    <property type="entry name" value="ATP-synt_C"/>
    <property type="match status" value="1"/>
</dbReference>
<dbReference type="PRINTS" id="PR00124">
    <property type="entry name" value="ATPASEC"/>
</dbReference>
<dbReference type="SUPFAM" id="SSF81333">
    <property type="entry name" value="F1F0 ATP synthase subunit C"/>
    <property type="match status" value="1"/>
</dbReference>
<accession>P41015</accession>
<name>ATPL_BACCA</name>
<keyword id="KW-0066">ATP synthesis</keyword>
<keyword id="KW-1003">Cell membrane</keyword>
<keyword id="KW-0138">CF(0)</keyword>
<keyword id="KW-0375">Hydrogen ion transport</keyword>
<keyword id="KW-0406">Ion transport</keyword>
<keyword id="KW-0446">Lipid-binding</keyword>
<keyword id="KW-0472">Membrane</keyword>
<keyword id="KW-0812">Transmembrane</keyword>
<keyword id="KW-1133">Transmembrane helix</keyword>
<keyword id="KW-0813">Transport</keyword>
<comment type="function">
    <text evidence="1">F(1)F(0) ATP synthase produces ATP from ADP in the presence of a proton or sodium gradient. F-type ATPases consist of two structural domains, F(1) containing the extramembraneous catalytic core and F(0) containing the membrane proton channel, linked together by a central stalk and a peripheral stalk. During catalysis, ATP synthesis in the catalytic domain of F(1) is coupled via a rotary mechanism of the central stalk subunits to proton translocation.</text>
</comment>
<comment type="function">
    <text evidence="1">Key component of the F(0) channel; it plays a direct role in translocation across the membrane. A homomeric c-ring of between 10-14 subunits forms the central stalk rotor element with the F(1) delta and epsilon subunits.</text>
</comment>
<comment type="subunit">
    <text evidence="1">F-type ATPases have 2 components, F(1) - the catalytic core - and F(0) - the membrane proton channel. F(1) has five subunits: alpha(3), beta(3), gamma(1), delta(1), epsilon(1). F(0) has three main subunits: a(1), b(2) and c(10-14). The alpha and beta chains form an alternating ring which encloses part of the gamma chain. F(1) is attached to F(0) by a central stalk formed by the gamma and epsilon chains, while a peripheral stalk is formed by the delta and b chains.</text>
</comment>
<comment type="subcellular location">
    <subcellularLocation>
        <location evidence="1">Cell membrane</location>
        <topology evidence="1">Multi-pass membrane protein</topology>
    </subcellularLocation>
</comment>
<comment type="similarity">
    <text evidence="1">Belongs to the ATPase C chain family.</text>
</comment>